<evidence type="ECO:0000250" key="1">
    <source>
        <dbReference type="UniProtKB" id="P03700"/>
    </source>
</evidence>
<evidence type="ECO:0000255" key="2">
    <source>
        <dbReference type="PROSITE-ProRule" id="PRU01246"/>
    </source>
</evidence>
<evidence type="ECO:0000255" key="3">
    <source>
        <dbReference type="PROSITE-ProRule" id="PRU01248"/>
    </source>
</evidence>
<evidence type="ECO:0000305" key="4"/>
<gene>
    <name type="primary">int</name>
</gene>
<organism>
    <name type="scientific">Enterobacteria phage P21</name>
    <name type="common">Bacteriophage 21</name>
    <name type="synonym">Bacteriophage P21</name>
    <dbReference type="NCBI Taxonomy" id="10711"/>
    <lineage>
        <taxon>Viruses</taxon>
        <taxon>Duplodnaviria</taxon>
        <taxon>Heunggongvirae</taxon>
        <taxon>Uroviricota</taxon>
        <taxon>Caudoviricetes</taxon>
        <taxon>Lambdavirus</taxon>
        <taxon>Lambdavirus lambda</taxon>
    </lineage>
</organism>
<feature type="chain" id="PRO_0000197520" description="Integrase">
    <location>
        <begin position="1"/>
        <end position="380"/>
    </location>
</feature>
<feature type="domain" description="Core-binding (CB)" evidence="3">
    <location>
        <begin position="84"/>
        <end position="169"/>
    </location>
</feature>
<feature type="domain" description="Tyr recombinase" evidence="2">
    <location>
        <begin position="191"/>
        <end position="377"/>
    </location>
</feature>
<feature type="active site" evidence="2">
    <location>
        <position position="228"/>
    </location>
</feature>
<feature type="active site" evidence="2">
    <location>
        <position position="251"/>
    </location>
</feature>
<feature type="active site" evidence="2">
    <location>
        <position position="332"/>
    </location>
</feature>
<feature type="active site" evidence="2">
    <location>
        <position position="335"/>
    </location>
</feature>
<feature type="active site" evidence="2">
    <location>
        <position position="355"/>
    </location>
</feature>
<feature type="active site" description="O-(3'-phospho-DNA)-tyrosine intermediate" evidence="2">
    <location>
        <position position="364"/>
    </location>
</feature>
<sequence>MAARPRSHKISIPNLYCKLDKRTGKVYWQYKHPLSGRFHSLGTDENEAKQVATEANTIIAEQRTRQILSVNERLERMKGRRSDITVTEWLDKYISIQEDRLQHNELRPNSYRQKGKPIRLFREHCGMQHLKDITALDIAEIIDAVKAEGHNRMAQVVRMVLIDVFKEAQHAGHVPPGFNPAQATKQPRNRVNRQRLSLLEWQAIFESVSRRQPYLKCGMLLALVTGQRLGDICNLKFSDIWDDMLHITQEKTGSKLAIPLNLKCDALNITLREVISQCRDAVVSKYLVHYRHTTSQANRGDQVSANTLTTAFKKAKEKCGIKWEQGTAPTFHEQRSLSERLYREQGLDTQKLLGHKSRKMTDRYNDDRGKDWIIVDIKTA</sequence>
<dbReference type="EC" id="2.7.7.-" evidence="1"/>
<dbReference type="EC" id="3.1.-.-" evidence="1"/>
<dbReference type="EMBL" id="M61865">
    <property type="protein sequence ID" value="AAA32336.1"/>
    <property type="molecule type" value="Genomic_DNA"/>
</dbReference>
<dbReference type="SMR" id="P27077"/>
<dbReference type="GO" id="GO:0003677">
    <property type="term" value="F:DNA binding"/>
    <property type="evidence" value="ECO:0007669"/>
    <property type="project" value="UniProtKB-KW"/>
</dbReference>
<dbReference type="GO" id="GO:0016787">
    <property type="term" value="F:hydrolase activity"/>
    <property type="evidence" value="ECO:0007669"/>
    <property type="project" value="UniProtKB-KW"/>
</dbReference>
<dbReference type="GO" id="GO:0008907">
    <property type="term" value="F:integrase activity"/>
    <property type="evidence" value="ECO:0007669"/>
    <property type="project" value="InterPro"/>
</dbReference>
<dbReference type="GO" id="GO:0016740">
    <property type="term" value="F:transferase activity"/>
    <property type="evidence" value="ECO:0007669"/>
    <property type="project" value="UniProtKB-KW"/>
</dbReference>
<dbReference type="GO" id="GO:0006310">
    <property type="term" value="P:DNA recombination"/>
    <property type="evidence" value="ECO:0007669"/>
    <property type="project" value="UniProtKB-KW"/>
</dbReference>
<dbReference type="GO" id="GO:0075713">
    <property type="term" value="P:establishment of integrated proviral latency"/>
    <property type="evidence" value="ECO:0007669"/>
    <property type="project" value="UniProtKB-KW"/>
</dbReference>
<dbReference type="GO" id="GO:0046718">
    <property type="term" value="P:symbiont entry into host cell"/>
    <property type="evidence" value="ECO:0007669"/>
    <property type="project" value="UniProtKB-KW"/>
</dbReference>
<dbReference type="GO" id="GO:0044826">
    <property type="term" value="P:viral genome integration into host DNA"/>
    <property type="evidence" value="ECO:0007669"/>
    <property type="project" value="UniProtKB-KW"/>
</dbReference>
<dbReference type="CDD" id="cd00800">
    <property type="entry name" value="INT_Lambda_C"/>
    <property type="match status" value="1"/>
</dbReference>
<dbReference type="Gene3D" id="1.10.150.130">
    <property type="match status" value="1"/>
</dbReference>
<dbReference type="Gene3D" id="3.30.160.60">
    <property type="entry name" value="Classic Zinc Finger"/>
    <property type="match status" value="1"/>
</dbReference>
<dbReference type="Gene3D" id="1.10.443.10">
    <property type="entry name" value="Intergrase catalytic core"/>
    <property type="match status" value="1"/>
</dbReference>
<dbReference type="InterPro" id="IPR044068">
    <property type="entry name" value="CB"/>
</dbReference>
<dbReference type="InterPro" id="IPR011010">
    <property type="entry name" value="DNA_brk_join_enz"/>
</dbReference>
<dbReference type="InterPro" id="IPR013762">
    <property type="entry name" value="Integrase-like_cat_sf"/>
</dbReference>
<dbReference type="InterPro" id="IPR002104">
    <property type="entry name" value="Integrase_catalytic"/>
</dbReference>
<dbReference type="InterPro" id="IPR015094">
    <property type="entry name" value="Integrase_lambda-typ_DNA-bd_N"/>
</dbReference>
<dbReference type="InterPro" id="IPR010998">
    <property type="entry name" value="Integrase_recombinase_N"/>
</dbReference>
<dbReference type="InterPro" id="IPR050090">
    <property type="entry name" value="Tyrosine_recombinase_XerCD"/>
</dbReference>
<dbReference type="PANTHER" id="PTHR30349">
    <property type="entry name" value="PHAGE INTEGRASE-RELATED"/>
    <property type="match status" value="1"/>
</dbReference>
<dbReference type="PANTHER" id="PTHR30349:SF64">
    <property type="entry name" value="PROPHAGE INTEGRASE INTD-RELATED"/>
    <property type="match status" value="1"/>
</dbReference>
<dbReference type="Pfam" id="PF09003">
    <property type="entry name" value="Arm-DNA-bind_1"/>
    <property type="match status" value="1"/>
</dbReference>
<dbReference type="Pfam" id="PF00589">
    <property type="entry name" value="Phage_integrase"/>
    <property type="match status" value="1"/>
</dbReference>
<dbReference type="SUPFAM" id="SSF56349">
    <property type="entry name" value="DNA breaking-rejoining enzymes"/>
    <property type="match status" value="1"/>
</dbReference>
<dbReference type="PROSITE" id="PS51900">
    <property type="entry name" value="CB"/>
    <property type="match status" value="1"/>
</dbReference>
<dbReference type="PROSITE" id="PS51898">
    <property type="entry name" value="TYR_RECOMBINASE"/>
    <property type="match status" value="1"/>
</dbReference>
<proteinExistence type="inferred from homology"/>
<name>VINT_BPP21</name>
<protein>
    <recommendedName>
        <fullName>Integrase</fullName>
        <ecNumber evidence="1">2.7.7.-</ecNumber>
        <ecNumber evidence="1">3.1.-.-</ecNumber>
    </recommendedName>
</protein>
<accession>P27077</accession>
<comment type="function">
    <text>Integrase is necessary for integration of the phage into the host genome by site-specific recombination. In conjunction with excisionase, integrase is also necessary for excision of the prophage from the host genome.</text>
</comment>
<comment type="similarity">
    <text evidence="4">Belongs to the 'phage' integrase family.</text>
</comment>
<reference key="1">
    <citation type="journal article" date="1991" name="New Biol.">
        <title>Recombination and modular exchange in the genesis of new lambdoid phages.</title>
        <authorList>
            <person name="Baker J."/>
            <person name="Limberger R."/>
            <person name="Schneider S.J."/>
            <person name="Campbell A."/>
        </authorList>
    </citation>
    <scope>NUCLEOTIDE SEQUENCE [GENOMIC DNA]</scope>
</reference>
<organismHost>
    <name type="scientific">Escherichia coli</name>
    <dbReference type="NCBI Taxonomy" id="562"/>
</organismHost>
<keyword id="KW-0229">DNA integration</keyword>
<keyword id="KW-0233">DNA recombination</keyword>
<keyword id="KW-0238">DNA-binding</keyword>
<keyword id="KW-0378">Hydrolase</keyword>
<keyword id="KW-0808">Transferase</keyword>
<keyword id="KW-1179">Viral genome integration</keyword>
<keyword id="KW-1160">Virus entry into host cell</keyword>